<keyword id="KW-0050">Antiport</keyword>
<keyword id="KW-0150">Chloroplast</keyword>
<keyword id="KW-0375">Hydrogen ion transport</keyword>
<keyword id="KW-0406">Ion transport</keyword>
<keyword id="KW-0472">Membrane</keyword>
<keyword id="KW-0934">Plastid</keyword>
<keyword id="KW-1001">Plastid inner membrane</keyword>
<keyword id="KW-0630">Potassium</keyword>
<keyword id="KW-0633">Potassium transport</keyword>
<keyword id="KW-0812">Transmembrane</keyword>
<keyword id="KW-1133">Transmembrane helix</keyword>
<keyword id="KW-0813">Transport</keyword>
<name>CEMA_STIHE</name>
<organism>
    <name type="scientific">Stigeoclonium helveticum</name>
    <name type="common">Green alga</name>
    <dbReference type="NCBI Taxonomy" id="55999"/>
    <lineage>
        <taxon>Eukaryota</taxon>
        <taxon>Viridiplantae</taxon>
        <taxon>Chlorophyta</taxon>
        <taxon>core chlorophytes</taxon>
        <taxon>Chlorophyceae</taxon>
        <taxon>OCC clade</taxon>
        <taxon>Chaetophorales</taxon>
        <taxon>Chaetophoraceae</taxon>
        <taxon>Stigeoclonium</taxon>
    </lineage>
</organism>
<dbReference type="EMBL" id="DQ630521">
    <property type="protein sequence ID" value="ABF60153.1"/>
    <property type="molecule type" value="Genomic_DNA"/>
</dbReference>
<dbReference type="RefSeq" id="YP_764429.1">
    <property type="nucleotide sequence ID" value="NC_008372.1"/>
</dbReference>
<dbReference type="SMR" id="Q06SD7"/>
<dbReference type="GeneID" id="4308396"/>
<dbReference type="GO" id="GO:0009706">
    <property type="term" value="C:chloroplast inner membrane"/>
    <property type="evidence" value="ECO:0007669"/>
    <property type="project" value="UniProtKB-SubCell"/>
</dbReference>
<dbReference type="GO" id="GO:0015297">
    <property type="term" value="F:antiporter activity"/>
    <property type="evidence" value="ECO:0007669"/>
    <property type="project" value="UniProtKB-KW"/>
</dbReference>
<dbReference type="GO" id="GO:0015078">
    <property type="term" value="F:proton transmembrane transporter activity"/>
    <property type="evidence" value="ECO:0007669"/>
    <property type="project" value="UniProtKB-UniRule"/>
</dbReference>
<dbReference type="GO" id="GO:0006813">
    <property type="term" value="P:potassium ion transport"/>
    <property type="evidence" value="ECO:0007669"/>
    <property type="project" value="UniProtKB-UniRule"/>
</dbReference>
<dbReference type="HAMAP" id="MF_01308">
    <property type="entry name" value="CemA_PxcA"/>
    <property type="match status" value="1"/>
</dbReference>
<dbReference type="InterPro" id="IPR004282">
    <property type="entry name" value="CemA"/>
</dbReference>
<dbReference type="PANTHER" id="PTHR33650:SF2">
    <property type="entry name" value="CHLOROPLAST ENVELOPE MEMBRANE PROTEIN"/>
    <property type="match status" value="1"/>
</dbReference>
<dbReference type="PANTHER" id="PTHR33650">
    <property type="entry name" value="CHLOROPLAST ENVELOPE MEMBRANE PROTEIN-RELATED"/>
    <property type="match status" value="1"/>
</dbReference>
<dbReference type="Pfam" id="PF03040">
    <property type="entry name" value="CemA"/>
    <property type="match status" value="2"/>
</dbReference>
<gene>
    <name evidence="1" type="primary">cemA</name>
</gene>
<geneLocation type="chloroplast"/>
<protein>
    <recommendedName>
        <fullName evidence="1">Potassium/proton antiporter CemA</fullName>
    </recommendedName>
    <alternativeName>
        <fullName evidence="1">Chloroplast envelope membrane protein A</fullName>
        <shortName evidence="1">CemA</shortName>
    </alternativeName>
</protein>
<proteinExistence type="inferred from homology"/>
<reference key="1">
    <citation type="journal article" date="2006" name="Mol. Genet. Genomics">
        <title>Distinctive architecture of the chloroplast genome in the chlorophycean green alga Stigeoclonium helveticum.</title>
        <authorList>
            <person name="Belanger A.-S."/>
            <person name="Brouard J.-S."/>
            <person name="Charlebois P."/>
            <person name="Otis C."/>
            <person name="Lemieux C."/>
            <person name="Turmel M."/>
        </authorList>
    </citation>
    <scope>NUCLEOTIDE SEQUENCE [LARGE SCALE GENOMIC DNA]</scope>
    <source>
        <strain>UTEX 441</strain>
    </source>
</reference>
<evidence type="ECO:0000255" key="1">
    <source>
        <dbReference type="HAMAP-Rule" id="MF_01308"/>
    </source>
</evidence>
<evidence type="ECO:0000305" key="2"/>
<feature type="chain" id="PRO_0000293535" description="Potassium/proton antiporter CemA">
    <location>
        <begin position="1"/>
        <end position="554"/>
    </location>
</feature>
<feature type="transmembrane region" description="Helical" evidence="1">
    <location>
        <begin position="50"/>
        <end position="70"/>
    </location>
</feature>
<feature type="transmembrane region" description="Helical" evidence="1">
    <location>
        <begin position="429"/>
        <end position="449"/>
    </location>
</feature>
<feature type="transmembrane region" description="Helical" evidence="1">
    <location>
        <begin position="479"/>
        <end position="499"/>
    </location>
</feature>
<feature type="transmembrane region" description="Helical" evidence="1">
    <location>
        <begin position="514"/>
        <end position="534"/>
    </location>
</feature>
<feature type="region of interest" description="Insert">
    <location>
        <begin position="113"/>
        <end position="410"/>
    </location>
</feature>
<comment type="function">
    <text evidence="1">Contributes to K(+)/H(+) antiport activity by supporting proton efflux to control proton extrusion and homeostasis in chloroplasts in a light-dependent manner to modulate photosynthesis. Prevents excessive induction of non-photochemical quenching (NPQ) under continuous-light conditions. Indirectly promotes efficient inorganic carbon uptake into chloroplasts.</text>
</comment>
<comment type="catalytic activity">
    <reaction evidence="1">
        <text>K(+)(in) + H(+)(out) = K(+)(out) + H(+)(in)</text>
        <dbReference type="Rhea" id="RHEA:29467"/>
        <dbReference type="ChEBI" id="CHEBI:15378"/>
        <dbReference type="ChEBI" id="CHEBI:29103"/>
    </reaction>
</comment>
<comment type="subcellular location">
    <subcellularLocation>
        <location evidence="1">Plastid</location>
        <location evidence="1">Chloroplast inner membrane</location>
        <topology evidence="1">Multi-pass membrane protein</topology>
    </subcellularLocation>
</comment>
<comment type="similarity">
    <text evidence="1 2">Belongs to the CemA family.</text>
</comment>
<sequence length="554" mass="64017">MTELEKIGLIPRSIVRMLDRFYYQIYLGTAEPLVKQFRFSKYLLLTSVKSLFVVLFIPFFINIFTKIYVFRPLVEYFWDRKQTEIFLNYELQEKAFSEIRNFEEKMYFDYLIKTENFFPEKPKYFLPEAPLPGELPMQKKELFGVNLQEYKFKSNHSCLKFYSTEANSSVFGFENGNSLKLSHVSLFASKYPIKFTVIKNDLFKIKNQEGKSGAFPASEEEKKLKKGEKALLFPLLPTFSFSPRKNSSFFLGEKENMGISPGSKEEKKLKFFFFPHSGGTFSHCSLGIEDSEGKFSPGRREISPLLPGEHCGKLGKNAIFLLEEEKNGSGETRASFATSGSKAPALEELKNQSIDFLIPLEKSSPQRTFFSQHLASDFCSFDLTAQTKFHFVSFPNSIDTVPYNFNKNTESIFRQKTRELANHYNNESISAITNLLADFMGLFILLFLLVNMKMSLMNTTAFLSESFFSLKDSKKAFLMLLFTDLLVGFHSPRGWEVIFHFLFEHFGLPENHNIIFLLVGTFPVLLDALFKYWIFRHLNRHSPATVATFQAMVE</sequence>
<accession>Q06SD7</accession>